<keyword id="KW-0067">ATP-binding</keyword>
<keyword id="KW-0227">DNA damage</keyword>
<keyword id="KW-0234">DNA repair</keyword>
<keyword id="KW-0238">DNA-binding</keyword>
<keyword id="KW-0547">Nucleotide-binding</keyword>
<keyword id="KW-1185">Reference proteome</keyword>
<proteinExistence type="inferred from homology"/>
<organism>
    <name type="scientific">Acetivibrio thermocellus (strain ATCC 27405 / DSM 1237 / JCM 9322 / NBRC 103400 / NCIMB 10682 / NRRL B-4536 / VPI 7372)</name>
    <name type="common">Clostridium thermocellum</name>
    <dbReference type="NCBI Taxonomy" id="203119"/>
    <lineage>
        <taxon>Bacteria</taxon>
        <taxon>Bacillati</taxon>
        <taxon>Bacillota</taxon>
        <taxon>Clostridia</taxon>
        <taxon>Eubacteriales</taxon>
        <taxon>Oscillospiraceae</taxon>
        <taxon>Acetivibrio</taxon>
    </lineage>
</organism>
<sequence length="870" mass="99390">MASLTPMMQQYLEIKEQYKDCILFFRLGDFYEMFFSDAEVASRELEITLTGKDCGLEERAPMCGVPFHSADSYIAKLISKGYKVAICEQIEDPALAKGLVKRDVIRIVTPGTVTDSAMLDEKKNNYLMSIYKNKNYYGIACVDLTTGEFLSTHITFGNTFNKLMDEIAKFSPSEIVVNGEFFHDENIKKTLKQRFDVYISGLEDKFFEKEFSIQKVRNYFKDYVIEENAFDLYINASGALLEYLEQTQKVNLSHIQNFNVYRIEEYMILDMATRRNLELTETMREKNRKGSLLWVLDRTMTSMGGRTLRKWIEQPLINLHDIKDRLDAVNEFKERFMIRSEVRELLRAVYDIERLMTKVILGSANCRDLISIKHSIGQVPYIKELLRDLKADLNVLSYNELDTLTDVYEIIDKAIVDDPPVAVKEGGIIKEGFNEEVDRLRSASKDGKKWIAHLESKERERTGIKNLKVGFNKVFGYYIEVTKSYYSQVPDDYIRKQTLANCERYITPELKEIENTVLGAEDRLVELEYQIFVDVRNKVAKEINRLKTTARSLARIDVLCSLAEVADRESYTMPEVTDDDKIEIKDGRHPVVEKIIGQEAFVPNDTYLDMDENQIAIITGPNMAGKSTYMRQVALIVLMAQIGSFVPAKSAKIGIVDRIFTRVGASDDLAAGQSTFMVEMSEVANILGNATSKSLLVLDEIGRGTSTYDGLSIAWAVIEYIGEKIGARTLFATHYHELTELEERIEGIKNYCISVEEKGEDIIFLRKILRGGADNSYGVQVARLAGIPDPVIHRAKEILKKLEDADITRKEKRITRRKQPIEGQIDVFTFNAAQRSYDEVLNELKSLDITTLTPLDAINVLYNLQKKVKG</sequence>
<reference key="1">
    <citation type="submission" date="2007-02" db="EMBL/GenBank/DDBJ databases">
        <title>Complete sequence of Clostridium thermocellum ATCC 27405.</title>
        <authorList>
            <consortium name="US DOE Joint Genome Institute"/>
            <person name="Copeland A."/>
            <person name="Lucas S."/>
            <person name="Lapidus A."/>
            <person name="Barry K."/>
            <person name="Detter J.C."/>
            <person name="Glavina del Rio T."/>
            <person name="Hammon N."/>
            <person name="Israni S."/>
            <person name="Dalin E."/>
            <person name="Tice H."/>
            <person name="Pitluck S."/>
            <person name="Chertkov O."/>
            <person name="Brettin T."/>
            <person name="Bruce D."/>
            <person name="Han C."/>
            <person name="Tapia R."/>
            <person name="Gilna P."/>
            <person name="Schmutz J."/>
            <person name="Larimer F."/>
            <person name="Land M."/>
            <person name="Hauser L."/>
            <person name="Kyrpides N."/>
            <person name="Mikhailova N."/>
            <person name="Wu J.H.D."/>
            <person name="Newcomb M."/>
            <person name="Richardson P."/>
        </authorList>
    </citation>
    <scope>NUCLEOTIDE SEQUENCE [LARGE SCALE GENOMIC DNA]</scope>
    <source>
        <strain>ATCC 27405 / DSM 1237 / JCM 9322 / NBRC 103400 / NCIMB 10682 / NRRL B-4536 / VPI 7372</strain>
    </source>
</reference>
<gene>
    <name evidence="1" type="primary">mutS</name>
    <name type="ordered locus">Cthe_0777</name>
</gene>
<protein>
    <recommendedName>
        <fullName evidence="1">DNA mismatch repair protein MutS</fullName>
    </recommendedName>
</protein>
<name>MUTS_ACET2</name>
<accession>A3DDI3</accession>
<dbReference type="EMBL" id="CP000568">
    <property type="protein sequence ID" value="ABN52012.1"/>
    <property type="molecule type" value="Genomic_DNA"/>
</dbReference>
<dbReference type="RefSeq" id="WP_003516351.1">
    <property type="nucleotide sequence ID" value="NC_009012.1"/>
</dbReference>
<dbReference type="SMR" id="A3DDI3"/>
<dbReference type="STRING" id="203119.Cthe_0777"/>
<dbReference type="GeneID" id="35803358"/>
<dbReference type="KEGG" id="cth:Cthe_0777"/>
<dbReference type="eggNOG" id="COG0249">
    <property type="taxonomic scope" value="Bacteria"/>
</dbReference>
<dbReference type="HOGENOM" id="CLU_002472_4_0_9"/>
<dbReference type="OrthoDB" id="9802448at2"/>
<dbReference type="Proteomes" id="UP000002145">
    <property type="component" value="Chromosome"/>
</dbReference>
<dbReference type="GO" id="GO:0005829">
    <property type="term" value="C:cytosol"/>
    <property type="evidence" value="ECO:0007669"/>
    <property type="project" value="TreeGrafter"/>
</dbReference>
<dbReference type="GO" id="GO:0005524">
    <property type="term" value="F:ATP binding"/>
    <property type="evidence" value="ECO:0007669"/>
    <property type="project" value="UniProtKB-UniRule"/>
</dbReference>
<dbReference type="GO" id="GO:0140664">
    <property type="term" value="F:ATP-dependent DNA damage sensor activity"/>
    <property type="evidence" value="ECO:0007669"/>
    <property type="project" value="InterPro"/>
</dbReference>
<dbReference type="GO" id="GO:0003684">
    <property type="term" value="F:damaged DNA binding"/>
    <property type="evidence" value="ECO:0007669"/>
    <property type="project" value="UniProtKB-UniRule"/>
</dbReference>
<dbReference type="GO" id="GO:0030983">
    <property type="term" value="F:mismatched DNA binding"/>
    <property type="evidence" value="ECO:0007669"/>
    <property type="project" value="InterPro"/>
</dbReference>
<dbReference type="GO" id="GO:0006298">
    <property type="term" value="P:mismatch repair"/>
    <property type="evidence" value="ECO:0007669"/>
    <property type="project" value="UniProtKB-UniRule"/>
</dbReference>
<dbReference type="CDD" id="cd03284">
    <property type="entry name" value="ABC_MutS1"/>
    <property type="match status" value="1"/>
</dbReference>
<dbReference type="FunFam" id="1.10.1420.10:FF:000007">
    <property type="entry name" value="DNA mismatch repair protein MutS"/>
    <property type="match status" value="1"/>
</dbReference>
<dbReference type="FunFam" id="3.40.1170.10:FF:000001">
    <property type="entry name" value="DNA mismatch repair protein MutS"/>
    <property type="match status" value="1"/>
</dbReference>
<dbReference type="FunFam" id="3.40.50.300:FF:001579">
    <property type="entry name" value="DNA mismatch repair protein MutS"/>
    <property type="match status" value="1"/>
</dbReference>
<dbReference type="Gene3D" id="1.10.1420.10">
    <property type="match status" value="2"/>
</dbReference>
<dbReference type="Gene3D" id="3.40.1170.10">
    <property type="entry name" value="DNA repair protein MutS, domain I"/>
    <property type="match status" value="1"/>
</dbReference>
<dbReference type="Gene3D" id="3.30.420.110">
    <property type="entry name" value="MutS, connector domain"/>
    <property type="match status" value="1"/>
</dbReference>
<dbReference type="Gene3D" id="3.40.50.300">
    <property type="entry name" value="P-loop containing nucleotide triphosphate hydrolases"/>
    <property type="match status" value="1"/>
</dbReference>
<dbReference type="HAMAP" id="MF_00096">
    <property type="entry name" value="MutS"/>
    <property type="match status" value="1"/>
</dbReference>
<dbReference type="InterPro" id="IPR005748">
    <property type="entry name" value="DNA_mismatch_repair_MutS"/>
</dbReference>
<dbReference type="InterPro" id="IPR007695">
    <property type="entry name" value="DNA_mismatch_repair_MutS-lik_N"/>
</dbReference>
<dbReference type="InterPro" id="IPR017261">
    <property type="entry name" value="DNA_mismatch_repair_MutS/MSH"/>
</dbReference>
<dbReference type="InterPro" id="IPR000432">
    <property type="entry name" value="DNA_mismatch_repair_MutS_C"/>
</dbReference>
<dbReference type="InterPro" id="IPR007861">
    <property type="entry name" value="DNA_mismatch_repair_MutS_clamp"/>
</dbReference>
<dbReference type="InterPro" id="IPR007696">
    <property type="entry name" value="DNA_mismatch_repair_MutS_core"/>
</dbReference>
<dbReference type="InterPro" id="IPR016151">
    <property type="entry name" value="DNA_mismatch_repair_MutS_N"/>
</dbReference>
<dbReference type="InterPro" id="IPR036187">
    <property type="entry name" value="DNA_mismatch_repair_MutS_sf"/>
</dbReference>
<dbReference type="InterPro" id="IPR007860">
    <property type="entry name" value="DNA_mmatch_repair_MutS_con_dom"/>
</dbReference>
<dbReference type="InterPro" id="IPR045076">
    <property type="entry name" value="MutS"/>
</dbReference>
<dbReference type="InterPro" id="IPR036678">
    <property type="entry name" value="MutS_con_dom_sf"/>
</dbReference>
<dbReference type="InterPro" id="IPR027417">
    <property type="entry name" value="P-loop_NTPase"/>
</dbReference>
<dbReference type="NCBIfam" id="TIGR01070">
    <property type="entry name" value="mutS1"/>
    <property type="match status" value="1"/>
</dbReference>
<dbReference type="NCBIfam" id="NF003810">
    <property type="entry name" value="PRK05399.1"/>
    <property type="match status" value="1"/>
</dbReference>
<dbReference type="PANTHER" id="PTHR11361:SF34">
    <property type="entry name" value="DNA MISMATCH REPAIR PROTEIN MSH1, MITOCHONDRIAL"/>
    <property type="match status" value="1"/>
</dbReference>
<dbReference type="PANTHER" id="PTHR11361">
    <property type="entry name" value="DNA MISMATCH REPAIR PROTEIN MUTS FAMILY MEMBER"/>
    <property type="match status" value="1"/>
</dbReference>
<dbReference type="Pfam" id="PF01624">
    <property type="entry name" value="MutS_I"/>
    <property type="match status" value="1"/>
</dbReference>
<dbReference type="Pfam" id="PF05188">
    <property type="entry name" value="MutS_II"/>
    <property type="match status" value="1"/>
</dbReference>
<dbReference type="Pfam" id="PF05192">
    <property type="entry name" value="MutS_III"/>
    <property type="match status" value="1"/>
</dbReference>
<dbReference type="Pfam" id="PF05190">
    <property type="entry name" value="MutS_IV"/>
    <property type="match status" value="1"/>
</dbReference>
<dbReference type="Pfam" id="PF00488">
    <property type="entry name" value="MutS_V"/>
    <property type="match status" value="1"/>
</dbReference>
<dbReference type="PIRSF" id="PIRSF037677">
    <property type="entry name" value="DNA_mis_repair_Msh6"/>
    <property type="match status" value="1"/>
</dbReference>
<dbReference type="SMART" id="SM00534">
    <property type="entry name" value="MUTSac"/>
    <property type="match status" value="1"/>
</dbReference>
<dbReference type="SMART" id="SM00533">
    <property type="entry name" value="MUTSd"/>
    <property type="match status" value="1"/>
</dbReference>
<dbReference type="SUPFAM" id="SSF55271">
    <property type="entry name" value="DNA repair protein MutS, domain I"/>
    <property type="match status" value="1"/>
</dbReference>
<dbReference type="SUPFAM" id="SSF53150">
    <property type="entry name" value="DNA repair protein MutS, domain II"/>
    <property type="match status" value="1"/>
</dbReference>
<dbReference type="SUPFAM" id="SSF48334">
    <property type="entry name" value="DNA repair protein MutS, domain III"/>
    <property type="match status" value="1"/>
</dbReference>
<dbReference type="SUPFAM" id="SSF52540">
    <property type="entry name" value="P-loop containing nucleoside triphosphate hydrolases"/>
    <property type="match status" value="1"/>
</dbReference>
<dbReference type="PROSITE" id="PS00486">
    <property type="entry name" value="DNA_MISMATCH_REPAIR_2"/>
    <property type="match status" value="1"/>
</dbReference>
<feature type="chain" id="PRO_1000071274" description="DNA mismatch repair protein MutS">
    <location>
        <begin position="1"/>
        <end position="870"/>
    </location>
</feature>
<feature type="binding site" evidence="1">
    <location>
        <begin position="620"/>
        <end position="627"/>
    </location>
    <ligand>
        <name>ATP</name>
        <dbReference type="ChEBI" id="CHEBI:30616"/>
    </ligand>
</feature>
<evidence type="ECO:0000255" key="1">
    <source>
        <dbReference type="HAMAP-Rule" id="MF_00096"/>
    </source>
</evidence>
<comment type="function">
    <text evidence="1">This protein is involved in the repair of mismatches in DNA. It is possible that it carries out the mismatch recognition step. This protein has a weak ATPase activity.</text>
</comment>
<comment type="similarity">
    <text evidence="1">Belongs to the DNA mismatch repair MutS family.</text>
</comment>